<keyword id="KW-0012">Acyltransferase</keyword>
<keyword id="KW-0028">Amino-acid biosynthesis</keyword>
<keyword id="KW-0963">Cytoplasm</keyword>
<keyword id="KW-0486">Methionine biosynthesis</keyword>
<keyword id="KW-0808">Transferase</keyword>
<reference key="1">
    <citation type="submission" date="2006-06" db="EMBL/GenBank/DDBJ databases">
        <title>Complete sequence of chromosome of Mycobacterium sp. MCS.</title>
        <authorList>
            <consortium name="US DOE Joint Genome Institute"/>
            <person name="Copeland A."/>
            <person name="Lucas S."/>
            <person name="Lapidus A."/>
            <person name="Barry K."/>
            <person name="Detter J.C."/>
            <person name="Glavina del Rio T."/>
            <person name="Hammon N."/>
            <person name="Israni S."/>
            <person name="Dalin E."/>
            <person name="Tice H."/>
            <person name="Pitluck S."/>
            <person name="Martinez M."/>
            <person name="Schmutz J."/>
            <person name="Larimer F."/>
            <person name="Land M."/>
            <person name="Hauser L."/>
            <person name="Kyrpides N."/>
            <person name="Kim E."/>
            <person name="Miller C.D."/>
            <person name="Hughes J.E."/>
            <person name="Anderson A.J."/>
            <person name="Sims R.C."/>
            <person name="Richardson P."/>
        </authorList>
    </citation>
    <scope>NUCLEOTIDE SEQUENCE [LARGE SCALE GENOMIC DNA]</scope>
    <source>
        <strain>MCS</strain>
    </source>
</reference>
<feature type="chain" id="PRO_1000021887" description="Homoserine O-acetyltransferase">
    <location>
        <begin position="1"/>
        <end position="373"/>
    </location>
</feature>
<feature type="domain" description="AB hydrolase-1" evidence="1">
    <location>
        <begin position="52"/>
        <end position="356"/>
    </location>
</feature>
<feature type="active site" description="Nucleophile" evidence="1">
    <location>
        <position position="157"/>
    </location>
</feature>
<feature type="active site" evidence="1">
    <location>
        <position position="320"/>
    </location>
</feature>
<feature type="active site" evidence="1">
    <location>
        <position position="350"/>
    </location>
</feature>
<feature type="binding site" evidence="1">
    <location>
        <position position="227"/>
    </location>
    <ligand>
        <name>substrate</name>
    </ligand>
</feature>
<feature type="binding site" evidence="1">
    <location>
        <position position="351"/>
    </location>
    <ligand>
        <name>substrate</name>
    </ligand>
</feature>
<organism>
    <name type="scientific">Mycobacterium sp. (strain MCS)</name>
    <dbReference type="NCBI Taxonomy" id="164756"/>
    <lineage>
        <taxon>Bacteria</taxon>
        <taxon>Bacillati</taxon>
        <taxon>Actinomycetota</taxon>
        <taxon>Actinomycetes</taxon>
        <taxon>Mycobacteriales</taxon>
        <taxon>Mycobacteriaceae</taxon>
        <taxon>Mycobacterium</taxon>
    </lineage>
</organism>
<name>METXA_MYCSS</name>
<sequence length="373" mass="38960">MKSPAVPALDLPAEGETGVVDIGPLTLESGAVIDDVSIAVQRWGELSPNRDNVVMVLHALTGDSHVTGPAGPDHPTPGWWDGVAGPGAPIDTDRWCAVSTNVLGGCRGSTGPSSIAPDGRPYGSRFPAVTIRDQVTADLAALEALGITEVAAVVGGSMGGARALEWIVGHPATVRSALILAVGARATADQIGTQSTQVAAIKADPDWCGGDYHDTGRVPSTGLAIARRFAHLTYRGEVELDDRFGNHAQGDESPTDGGRYAVQSYLEYQGAKLVERFDAGTYVTLTDALSSHDVGRGRGGVRAALQGCRVPTIVGGVTSDRLYPLRLQQELAELLPGCTGLDVVDSVYGHDGFLVETEAVGKLIRRTLELAER</sequence>
<dbReference type="EC" id="2.3.1.31" evidence="1"/>
<dbReference type="EMBL" id="CP000384">
    <property type="protein sequence ID" value="ABG07319.1"/>
    <property type="molecule type" value="Genomic_DNA"/>
</dbReference>
<dbReference type="SMR" id="Q1BCR5"/>
<dbReference type="ESTHER" id="mycsk-metx">
    <property type="family name" value="Homoserine_transacetylase"/>
</dbReference>
<dbReference type="KEGG" id="mmc:Mmcs_1207"/>
<dbReference type="HOGENOM" id="CLU_028760_1_0_11"/>
<dbReference type="BioCyc" id="MSP164756:G1G6O-1233-MONOMER"/>
<dbReference type="UniPathway" id="UPA00051">
    <property type="reaction ID" value="UER00074"/>
</dbReference>
<dbReference type="GO" id="GO:0005737">
    <property type="term" value="C:cytoplasm"/>
    <property type="evidence" value="ECO:0007669"/>
    <property type="project" value="UniProtKB-SubCell"/>
</dbReference>
<dbReference type="GO" id="GO:0004414">
    <property type="term" value="F:homoserine O-acetyltransferase activity"/>
    <property type="evidence" value="ECO:0007669"/>
    <property type="project" value="UniProtKB-UniRule"/>
</dbReference>
<dbReference type="GO" id="GO:0009092">
    <property type="term" value="P:homoserine metabolic process"/>
    <property type="evidence" value="ECO:0007669"/>
    <property type="project" value="TreeGrafter"/>
</dbReference>
<dbReference type="GO" id="GO:0009086">
    <property type="term" value="P:methionine biosynthetic process"/>
    <property type="evidence" value="ECO:0007669"/>
    <property type="project" value="UniProtKB-UniRule"/>
</dbReference>
<dbReference type="Gene3D" id="3.40.50.1820">
    <property type="entry name" value="alpha/beta hydrolase"/>
    <property type="match status" value="1"/>
</dbReference>
<dbReference type="HAMAP" id="MF_00296">
    <property type="entry name" value="MetX_acyltransf"/>
    <property type="match status" value="1"/>
</dbReference>
<dbReference type="InterPro" id="IPR000073">
    <property type="entry name" value="AB_hydrolase_1"/>
</dbReference>
<dbReference type="InterPro" id="IPR029058">
    <property type="entry name" value="AB_hydrolase_fold"/>
</dbReference>
<dbReference type="InterPro" id="IPR008220">
    <property type="entry name" value="HAT_MetX-like"/>
</dbReference>
<dbReference type="NCBIfam" id="TIGR01392">
    <property type="entry name" value="homoserO_Ac_trn"/>
    <property type="match status" value="1"/>
</dbReference>
<dbReference type="NCBIfam" id="NF001209">
    <property type="entry name" value="PRK00175.1"/>
    <property type="match status" value="1"/>
</dbReference>
<dbReference type="PANTHER" id="PTHR32268">
    <property type="entry name" value="HOMOSERINE O-ACETYLTRANSFERASE"/>
    <property type="match status" value="1"/>
</dbReference>
<dbReference type="PANTHER" id="PTHR32268:SF11">
    <property type="entry name" value="HOMOSERINE O-ACETYLTRANSFERASE"/>
    <property type="match status" value="1"/>
</dbReference>
<dbReference type="Pfam" id="PF00561">
    <property type="entry name" value="Abhydrolase_1"/>
    <property type="match status" value="1"/>
</dbReference>
<dbReference type="PIRSF" id="PIRSF000443">
    <property type="entry name" value="Homoser_Ac_trans"/>
    <property type="match status" value="1"/>
</dbReference>
<dbReference type="SUPFAM" id="SSF53474">
    <property type="entry name" value="alpha/beta-Hydrolases"/>
    <property type="match status" value="1"/>
</dbReference>
<proteinExistence type="inferred from homology"/>
<accession>Q1BCR5</accession>
<gene>
    <name evidence="1" type="primary">metXA</name>
    <name type="ordered locus">Mmcs_1207</name>
</gene>
<evidence type="ECO:0000255" key="1">
    <source>
        <dbReference type="HAMAP-Rule" id="MF_00296"/>
    </source>
</evidence>
<comment type="function">
    <text evidence="1">Transfers an acetyl group from acetyl-CoA to L-homoserine, forming acetyl-L-homoserine.</text>
</comment>
<comment type="catalytic activity">
    <reaction evidence="1">
        <text>L-homoserine + acetyl-CoA = O-acetyl-L-homoserine + CoA</text>
        <dbReference type="Rhea" id="RHEA:13701"/>
        <dbReference type="ChEBI" id="CHEBI:57287"/>
        <dbReference type="ChEBI" id="CHEBI:57288"/>
        <dbReference type="ChEBI" id="CHEBI:57476"/>
        <dbReference type="ChEBI" id="CHEBI:57716"/>
        <dbReference type="EC" id="2.3.1.31"/>
    </reaction>
</comment>
<comment type="pathway">
    <text evidence="1">Amino-acid biosynthesis; L-methionine biosynthesis via de novo pathway; O-acetyl-L-homoserine from L-homoserine: step 1/1.</text>
</comment>
<comment type="subunit">
    <text evidence="1">Homodimer.</text>
</comment>
<comment type="subcellular location">
    <subcellularLocation>
        <location evidence="1">Cytoplasm</location>
    </subcellularLocation>
</comment>
<comment type="similarity">
    <text evidence="1">Belongs to the AB hydrolase superfamily. MetX family.</text>
</comment>
<protein>
    <recommendedName>
        <fullName evidence="1">Homoserine O-acetyltransferase</fullName>
        <shortName evidence="1">HAT</shortName>
        <ecNumber evidence="1">2.3.1.31</ecNumber>
    </recommendedName>
    <alternativeName>
        <fullName evidence="1">Homoserine transacetylase</fullName>
        <shortName evidence="1">HTA</shortName>
    </alternativeName>
</protein>